<name>O8G2P_HUMAN</name>
<gene>
    <name evidence="5" type="primary">OR8G2P</name>
    <name evidence="5" type="synonym">OR8G2</name>
    <name evidence="5" type="synonym">OR8G4</name>
</gene>
<reference key="1">
    <citation type="journal article" date="2006" name="Nature">
        <title>Human chromosome 11 DNA sequence and analysis including novel gene identification.</title>
        <authorList>
            <person name="Taylor T.D."/>
            <person name="Noguchi H."/>
            <person name="Totoki Y."/>
            <person name="Toyoda A."/>
            <person name="Kuroki Y."/>
            <person name="Dewar K."/>
            <person name="Lloyd C."/>
            <person name="Itoh T."/>
            <person name="Takeda T."/>
            <person name="Kim D.-W."/>
            <person name="She X."/>
            <person name="Barlow K.F."/>
            <person name="Bloom T."/>
            <person name="Bruford E."/>
            <person name="Chang J.L."/>
            <person name="Cuomo C.A."/>
            <person name="Eichler E."/>
            <person name="FitzGerald M.G."/>
            <person name="Jaffe D.B."/>
            <person name="LaButti K."/>
            <person name="Nicol R."/>
            <person name="Park H.-S."/>
            <person name="Seaman C."/>
            <person name="Sougnez C."/>
            <person name="Yang X."/>
            <person name="Zimmer A.R."/>
            <person name="Zody M.C."/>
            <person name="Birren B.W."/>
            <person name="Nusbaum C."/>
            <person name="Fujiyama A."/>
            <person name="Hattori M."/>
            <person name="Rogers J."/>
            <person name="Lander E.S."/>
            <person name="Sakaki Y."/>
        </authorList>
    </citation>
    <scope>NUCLEOTIDE SEQUENCE [LARGE SCALE GENOMIC DNA]</scope>
</reference>
<reference key="2">
    <citation type="journal article" date="2004" name="Genome Res.">
        <title>The status, quality, and expansion of the NIH full-length cDNA project: the Mammalian Gene Collection (MGC).</title>
        <authorList>
            <consortium name="The MGC Project Team"/>
        </authorList>
    </citation>
    <scope>NUCLEOTIDE SEQUENCE [LARGE SCALE MRNA]</scope>
</reference>
<reference key="3">
    <citation type="journal article" date="1997" name="Genomics">
        <title>Specific repertoire of olfactory receptor genes in the male germ cells of several mammalian species.</title>
        <authorList>
            <person name="Vanderhaeghen P."/>
            <person name="Schurmans S."/>
            <person name="Vassart G."/>
            <person name="Parmentier M."/>
        </authorList>
    </citation>
    <scope>NUCLEOTIDE SEQUENCE [MRNA] OF 139-295</scope>
    <source>
        <tissue>Testis</tissue>
    </source>
</reference>
<reference key="4">
    <citation type="journal article" date="2004" name="Proc. Natl. Acad. Sci. U.S.A.">
        <title>The human olfactory receptor gene family.</title>
        <authorList>
            <person name="Malnic B."/>
            <person name="Godfrey P.A."/>
            <person name="Buck L.B."/>
        </authorList>
    </citation>
    <scope>IDENTIFICATION</scope>
</reference>
<reference key="5">
    <citation type="journal article" date="2004" name="Proc. Natl. Acad. Sci. U.S.A.">
        <authorList>
            <person name="Malnic B."/>
            <person name="Godfrey P.A."/>
            <person name="Buck L.B."/>
        </authorList>
    </citation>
    <scope>ERRATUM OF PUBMED:14983052</scope>
</reference>
<protein>
    <recommendedName>
        <fullName evidence="4">Olfactory receptor 8G2</fullName>
    </recommendedName>
    <alternativeName>
        <fullName evidence="4">Olfactory receptor 8G4</fullName>
    </alternativeName>
    <alternativeName>
        <fullName evidence="3">Olfactory receptor OR11-292</fullName>
    </alternativeName>
    <alternativeName>
        <fullName>Olfactory receptor TPCR120</fullName>
    </alternativeName>
</protein>
<feature type="chain" id="PRO_0000432917" description="Olfactory receptor 8G2">
    <location>
        <begin position="1"/>
        <end position="304"/>
    </location>
</feature>
<feature type="topological domain" description="Extracellular" evidence="4">
    <location>
        <begin position="1"/>
        <end position="41"/>
    </location>
</feature>
<feature type="transmembrane region" description="Helical; Name=1" evidence="1">
    <location>
        <begin position="42"/>
        <end position="62"/>
    </location>
</feature>
<feature type="topological domain" description="Cytoplasmic" evidence="4">
    <location>
        <begin position="63"/>
        <end position="69"/>
    </location>
</feature>
<feature type="transmembrane region" description="Helical; Name=2" evidence="1">
    <location>
        <begin position="70"/>
        <end position="90"/>
    </location>
</feature>
<feature type="topological domain" description="Extracellular" evidence="4">
    <location>
        <begin position="91"/>
        <end position="110"/>
    </location>
</feature>
<feature type="transmembrane region" description="Helical; Name=3" evidence="1">
    <location>
        <begin position="111"/>
        <end position="130"/>
    </location>
</feature>
<feature type="topological domain" description="Cytoplasmic" evidence="4">
    <location>
        <begin position="131"/>
        <end position="154"/>
    </location>
</feature>
<feature type="transmembrane region" description="Helical; Name=4" evidence="1">
    <location>
        <begin position="155"/>
        <end position="175"/>
    </location>
</feature>
<feature type="topological domain" description="Extracellular" evidence="4">
    <location>
        <begin position="176"/>
        <end position="193"/>
    </location>
</feature>
<feature type="transmembrane region" description="Helical; Name=5" evidence="1">
    <location>
        <begin position="194"/>
        <end position="214"/>
    </location>
</feature>
<feature type="topological domain" description="Cytoplasmic" evidence="4">
    <location>
        <begin position="215"/>
        <end position="217"/>
    </location>
</feature>
<feature type="transmembrane region" description="Helical; Name=6" evidence="1">
    <location>
        <begin position="218"/>
        <end position="238"/>
    </location>
</feature>
<feature type="topological domain" description="Extracellular" evidence="4">
    <location>
        <begin position="239"/>
        <end position="257"/>
    </location>
</feature>
<feature type="transmembrane region" description="Helical; Name=7" evidence="1">
    <location>
        <begin position="258"/>
        <end position="278"/>
    </location>
</feature>
<feature type="topological domain" description="Cytoplasmic" evidence="4">
    <location>
        <begin position="279"/>
        <end position="304"/>
    </location>
</feature>
<feature type="glycosylation site" description="N-linked (GlcNAc...) asparagine" evidence="1">
    <location>
        <position position="18"/>
    </location>
</feature>
<feature type="disulfide bond" evidence="2">
    <location>
        <begin position="110"/>
        <end position="192"/>
    </location>
</feature>
<feature type="sequence conflict" description="In Ref. 3; CAA61816." evidence="4" ref="3">
    <original>V</original>
    <variation>I</variation>
    <location>
        <position position="163"/>
    </location>
</feature>
<feature type="sequence conflict" description="In Ref. 3; CAA61816." evidence="4" ref="3">
    <original>V</original>
    <variation>G</variation>
    <location>
        <position position="263"/>
    </location>
</feature>
<feature type="sequence conflict" description="In Ref. 3; CAA61816." evidence="4" ref="3">
    <original>R</original>
    <variation>G</variation>
    <location>
        <position position="284"/>
    </location>
</feature>
<feature type="sequence conflict" description="In Ref. 3; CAA61816." evidence="4" ref="3">
    <original>TI</original>
    <variation>IV</variation>
    <location>
        <begin position="293"/>
        <end position="294"/>
    </location>
</feature>
<comment type="function">
    <text evidence="4">Odorant receptor.</text>
</comment>
<comment type="subcellular location">
    <subcellularLocation>
        <location evidence="4">Cell membrane</location>
        <topology evidence="1">Multi-pass membrane protein</topology>
    </subcellularLocation>
</comment>
<comment type="similarity">
    <text evidence="2">Belongs to the G-protein coupled receptor 1 family.</text>
</comment>
<comment type="online information" name="Human Olfactory Receptor Data Exploratorium (HORDE)">
    <link uri="http://genome.weizmann.ac.il/horde/card/index/symbol:OR8G2P"/>
</comment>
<dbReference type="EMBL" id="FO680687">
    <property type="status" value="NOT_ANNOTATED_CDS"/>
    <property type="molecule type" value="Genomic_DNA"/>
</dbReference>
<dbReference type="EMBL" id="BC136638">
    <property type="protein sequence ID" value="AAI36639.1"/>
    <property type="molecule type" value="mRNA"/>
</dbReference>
<dbReference type="EMBL" id="X89669">
    <property type="protein sequence ID" value="CAA61816.1"/>
    <property type="molecule type" value="mRNA"/>
</dbReference>
<dbReference type="EMBL" id="BK004426">
    <property type="protein sequence ID" value="DAA04824.1"/>
    <property type="molecule type" value="Genomic_DNA"/>
</dbReference>
<dbReference type="RefSeq" id="NP_001278367.1">
    <property type="nucleotide sequence ID" value="NM_001291438.1"/>
</dbReference>
<dbReference type="SMR" id="Q6IF36"/>
<dbReference type="GlyCosmos" id="Q6IF36">
    <property type="glycosylation" value="1 site, No reported glycans"/>
</dbReference>
<dbReference type="GlyGen" id="Q6IF36">
    <property type="glycosylation" value="1 site"/>
</dbReference>
<dbReference type="BioMuta" id="HGNC:8485"/>
<dbReference type="DNASU" id="26492"/>
<dbReference type="AGR" id="HGNC:8485"/>
<dbReference type="GeneCards" id="OR8G2P"/>
<dbReference type="HGNC" id="HGNC:8485">
    <property type="gene designation" value="OR8G2P"/>
</dbReference>
<dbReference type="neXtProt" id="NX_Q6IF36"/>
<dbReference type="InParanoid" id="Q6IF36"/>
<dbReference type="OrthoDB" id="9444602at2759"/>
<dbReference type="PAN-GO" id="Q6IF36">
    <property type="GO annotations" value="4 GO annotations based on evolutionary models"/>
</dbReference>
<dbReference type="PathwayCommons" id="Q6IF36"/>
<dbReference type="Reactome" id="R-HSA-9752946">
    <property type="pathway name" value="Expression and translocation of olfactory receptors"/>
</dbReference>
<dbReference type="BioGRID-ORCS" id="26492">
    <property type="hits" value="13 hits in 212 CRISPR screens"/>
</dbReference>
<dbReference type="GenomeRNAi" id="26492"/>
<dbReference type="Pharos" id="Q6IF36">
    <property type="development level" value="Tdark"/>
</dbReference>
<dbReference type="PRO" id="PR:Q6IF36"/>
<dbReference type="Proteomes" id="UP000005640">
    <property type="component" value="Unplaced"/>
</dbReference>
<dbReference type="RNAct" id="Q6IF36">
    <property type="molecule type" value="protein"/>
</dbReference>
<dbReference type="GO" id="GO:0005886">
    <property type="term" value="C:plasma membrane"/>
    <property type="evidence" value="ECO:0007669"/>
    <property type="project" value="UniProtKB-SubCell"/>
</dbReference>
<dbReference type="GO" id="GO:0004930">
    <property type="term" value="F:G protein-coupled receptor activity"/>
    <property type="evidence" value="ECO:0007669"/>
    <property type="project" value="UniProtKB-KW"/>
</dbReference>
<dbReference type="GO" id="GO:0005549">
    <property type="term" value="F:odorant binding"/>
    <property type="evidence" value="ECO:0000318"/>
    <property type="project" value="GO_Central"/>
</dbReference>
<dbReference type="GO" id="GO:0004984">
    <property type="term" value="F:olfactory receptor activity"/>
    <property type="evidence" value="ECO:0000318"/>
    <property type="project" value="GO_Central"/>
</dbReference>
<dbReference type="GO" id="GO:0007186">
    <property type="term" value="P:G protein-coupled receptor signaling pathway"/>
    <property type="evidence" value="ECO:0000318"/>
    <property type="project" value="GO_Central"/>
</dbReference>
<dbReference type="GO" id="GO:0007608">
    <property type="term" value="P:sensory perception of smell"/>
    <property type="evidence" value="ECO:0000318"/>
    <property type="project" value="GO_Central"/>
</dbReference>
<dbReference type="FunFam" id="1.20.1070.10:FF:000004">
    <property type="entry name" value="Olfactory receptor"/>
    <property type="match status" value="1"/>
</dbReference>
<dbReference type="Gene3D" id="1.20.1070.10">
    <property type="entry name" value="Rhodopsin 7-helix transmembrane proteins"/>
    <property type="match status" value="1"/>
</dbReference>
<dbReference type="InterPro" id="IPR000276">
    <property type="entry name" value="GPCR_Rhodpsn"/>
</dbReference>
<dbReference type="InterPro" id="IPR017452">
    <property type="entry name" value="GPCR_Rhodpsn_7TM"/>
</dbReference>
<dbReference type="InterPro" id="IPR000725">
    <property type="entry name" value="Olfact_rcpt"/>
</dbReference>
<dbReference type="PANTHER" id="PTHR48018">
    <property type="entry name" value="OLFACTORY RECEPTOR"/>
    <property type="match status" value="1"/>
</dbReference>
<dbReference type="Pfam" id="PF13853">
    <property type="entry name" value="7tm_4"/>
    <property type="match status" value="1"/>
</dbReference>
<dbReference type="PRINTS" id="PR00237">
    <property type="entry name" value="GPCRRHODOPSN"/>
</dbReference>
<dbReference type="PRINTS" id="PR00245">
    <property type="entry name" value="OLFACTORYR"/>
</dbReference>
<dbReference type="SUPFAM" id="SSF81321">
    <property type="entry name" value="Family A G protein-coupled receptor-like"/>
    <property type="match status" value="1"/>
</dbReference>
<dbReference type="PROSITE" id="PS00237">
    <property type="entry name" value="G_PROTEIN_RECEP_F1_1"/>
    <property type="match status" value="1"/>
</dbReference>
<dbReference type="PROSITE" id="PS50262">
    <property type="entry name" value="G_PROTEIN_RECEP_F1_2"/>
    <property type="match status" value="1"/>
</dbReference>
<sequence>MVFLSSVETDQRKMSAGNHSSVTEFILAGLSEQPELQLRLFLLFLGIYVVTVVGNLSMITLIGLSSHLHTPMYYFLSGLSFIDLCHSTIITPKMLVNFVTEKNIISYPECMTQLYFFLIFAIAECHMLAVTAYDRYVAICSPLLYNVIMSYHHCFWLTVGVYVLGILGSTIHTGFMLRLFLCKTNVINHYFCDLFPLLGLSCSSTYINELLVLVLSAFNILTPALTILASYIFIIASILRIRSTEGRSKAFSTCSSHILAVAVFFGSAAFMYLQPSSVSSMDQRKVSSVFYTTIVPMLNPQSIA</sequence>
<organism>
    <name type="scientific">Homo sapiens</name>
    <name type="common">Human</name>
    <dbReference type="NCBI Taxonomy" id="9606"/>
    <lineage>
        <taxon>Eukaryota</taxon>
        <taxon>Metazoa</taxon>
        <taxon>Chordata</taxon>
        <taxon>Craniata</taxon>
        <taxon>Vertebrata</taxon>
        <taxon>Euteleostomi</taxon>
        <taxon>Mammalia</taxon>
        <taxon>Eutheria</taxon>
        <taxon>Euarchontoglires</taxon>
        <taxon>Primates</taxon>
        <taxon>Haplorrhini</taxon>
        <taxon>Catarrhini</taxon>
        <taxon>Hominidae</taxon>
        <taxon>Homo</taxon>
    </lineage>
</organism>
<evidence type="ECO:0000255" key="1"/>
<evidence type="ECO:0000255" key="2">
    <source>
        <dbReference type="PROSITE-ProRule" id="PRU00521"/>
    </source>
</evidence>
<evidence type="ECO:0000303" key="3">
    <source>
    </source>
</evidence>
<evidence type="ECO:0000305" key="4"/>
<evidence type="ECO:0000312" key="5">
    <source>
        <dbReference type="HGNC" id="HGNC:8485"/>
    </source>
</evidence>
<keyword id="KW-1003">Cell membrane</keyword>
<keyword id="KW-1015">Disulfide bond</keyword>
<keyword id="KW-0297">G-protein coupled receptor</keyword>
<keyword id="KW-0325">Glycoprotein</keyword>
<keyword id="KW-0472">Membrane</keyword>
<keyword id="KW-0552">Olfaction</keyword>
<keyword id="KW-0675">Receptor</keyword>
<keyword id="KW-1185">Reference proteome</keyword>
<keyword id="KW-0716">Sensory transduction</keyword>
<keyword id="KW-0807">Transducer</keyword>
<keyword id="KW-0812">Transmembrane</keyword>
<keyword id="KW-1133">Transmembrane helix</keyword>
<accession>Q6IF36</accession>
<accession>Q15614</accession>
<accession>Q6IF38</accession>
<proteinExistence type="evidence at transcript level"/>